<organism>
    <name type="scientific">Bacillus sp</name>
    <dbReference type="NCBI Taxonomy" id="1409"/>
    <lineage>
        <taxon>Bacteria</taxon>
        <taxon>Bacillati</taxon>
        <taxon>Bacillota</taxon>
        <taxon>Bacilli</taxon>
        <taxon>Bacillales</taxon>
        <taxon>Bacillaceae</taxon>
        <taxon>Bacillus</taxon>
    </lineage>
</organism>
<dbReference type="EMBL" id="X03409">
    <property type="protein sequence ID" value="CAA27143.1"/>
    <property type="molecule type" value="Genomic_DNA"/>
</dbReference>
<dbReference type="EMBL" id="X15670">
    <property type="protein sequence ID" value="CAA33714.1"/>
    <property type="status" value="ALT_INIT"/>
    <property type="molecule type" value="Genomic_DNA"/>
</dbReference>
<dbReference type="GO" id="GO:0003677">
    <property type="term" value="F:DNA binding"/>
    <property type="evidence" value="ECO:0007669"/>
    <property type="project" value="InterPro"/>
</dbReference>
<dbReference type="GO" id="GO:0006260">
    <property type="term" value="P:DNA replication"/>
    <property type="evidence" value="ECO:0007669"/>
    <property type="project" value="UniProtKB-KW"/>
</dbReference>
<dbReference type="InterPro" id="IPR000989">
    <property type="entry name" value="Rep"/>
</dbReference>
<dbReference type="Pfam" id="PF01446">
    <property type="entry name" value="Rep_1"/>
    <property type="match status" value="1"/>
</dbReference>
<feature type="chain" id="PRO_0000068318" description="Replication protein">
    <location>
        <begin position="1"/>
        <end position="235"/>
    </location>
</feature>
<feature type="binding site" evidence="1">
    <location>
        <position position="149"/>
    </location>
    <ligand>
        <name>DNA</name>
        <dbReference type="ChEBI" id="CHEBI:16991"/>
    </ligand>
</feature>
<reference key="1">
    <citation type="journal article" date="1986" name="Mol. Gen. Genet.">
        <title>Complete nucleotide sequences of Bacillus plasmids pUB110dB, pRBH1 and its copy mutants.</title>
        <authorList>
            <person name="Mueller R.E."/>
            <person name="Ano T."/>
            <person name="Imanaka T."/>
            <person name="Aiba S."/>
        </authorList>
    </citation>
    <scope>NUCLEOTIDE SEQUENCE [GENOMIC DNA]</scope>
    <source>
        <plasmid>pRBH1</plasmid>
    </source>
</reference>
<reference key="2">
    <citation type="journal article" date="1989" name="Nucleic Acids Res.">
        <title>Similarity of minus origins of replication and flanking open reading frames of plasmids pUB110, pTB913 and pMV158.</title>
        <authorList>
            <person name="van der Lelie D."/>
            <person name="Bron S."/>
            <person name="Venema G."/>
            <person name="Oskam L."/>
        </authorList>
    </citation>
    <scope>NUCLEOTIDE SEQUENCE [GENOMIC DNA]</scope>
    <source>
        <plasmid>pTB913</plasmid>
    </source>
</reference>
<sequence length="235" mass="27895">MKHGIQSQKVVAEVIKQKPTVRWLFLTLTVKNVYDGEELNKSLSDMAQGFRRMMQYKKINKNLVGFMRATEVTINNKDNSYNQHMHVLVCVEPTYFKNTENYVNQKQWIQFWKKAMKLDYDPNVKVQMIRPKNKYKSDIQSAIDETAKYPVKDTDFMTDDEEKNLKRLSDLEEGLHRKRLISYGGLLKEIHKKLNLDDTEEGDLIHTDDDEKADEDGFSIIAMWNWERKNYFIKE</sequence>
<geneLocation type="plasmid">
    <name>pRBH1</name>
</geneLocation>
<geneLocation type="plasmid">
    <name>pTB913</name>
</geneLocation>
<protein>
    <recommendedName>
        <fullName>Replication protein</fullName>
    </recommendedName>
</protein>
<keyword id="KW-0235">DNA replication</keyword>
<keyword id="KW-0614">Plasmid</keyword>
<proteinExistence type="inferred from homology"/>
<name>REPB_BACSP</name>
<accession>P0A0C4</accession>
<accession>P05061</accession>
<comment type="function">
    <text>Produces a single-strand nick in a specific site of the plasmid, and this nick results in single-strand replication by rolling circle mechanism.</text>
</comment>
<comment type="similarity">
    <text evidence="2">Belongs to the Gram-positive plasmids replication protein type 1 family.</text>
</comment>
<comment type="sequence caution" evidence="2">
    <conflict type="erroneous initiation">
        <sequence resource="EMBL-CDS" id="CAA33714"/>
    </conflict>
</comment>
<evidence type="ECO:0000250" key="1"/>
<evidence type="ECO:0000305" key="2"/>
<gene>
    <name type="primary">repB</name>
</gene>